<evidence type="ECO:0000255" key="1">
    <source>
        <dbReference type="HAMAP-Rule" id="MF_00458"/>
    </source>
</evidence>
<dbReference type="EC" id="1.97.1.12" evidence="1"/>
<dbReference type="EMBL" id="EF115542">
    <property type="protein sequence ID" value="ABK79496.1"/>
    <property type="molecule type" value="Genomic_DNA"/>
</dbReference>
<dbReference type="PIR" id="JC1067">
    <property type="entry name" value="JC1067"/>
</dbReference>
<dbReference type="RefSeq" id="YP_899407.1">
    <property type="nucleotide sequence ID" value="NC_008602.1"/>
</dbReference>
<dbReference type="SMR" id="Q9T2L6"/>
<dbReference type="FunCoup" id="Q9T2L6">
    <property type="interactions" value="371"/>
</dbReference>
<dbReference type="STRING" id="4558.Q9T2L6"/>
<dbReference type="GeneID" id="4549120"/>
<dbReference type="KEGG" id="sbi:4549120"/>
<dbReference type="InParanoid" id="Q9T2L6"/>
<dbReference type="OrthoDB" id="1871948at2759"/>
<dbReference type="Proteomes" id="UP000000768">
    <property type="component" value="Chloroplast"/>
</dbReference>
<dbReference type="ExpressionAtlas" id="Q9T2L6">
    <property type="expression patterns" value="baseline"/>
</dbReference>
<dbReference type="GO" id="GO:0009535">
    <property type="term" value="C:chloroplast thylakoid membrane"/>
    <property type="evidence" value="ECO:0007669"/>
    <property type="project" value="UniProtKB-SubCell"/>
</dbReference>
<dbReference type="GO" id="GO:0009522">
    <property type="term" value="C:photosystem I"/>
    <property type="evidence" value="ECO:0007669"/>
    <property type="project" value="UniProtKB-KW"/>
</dbReference>
<dbReference type="GO" id="GO:0051539">
    <property type="term" value="F:4 iron, 4 sulfur cluster binding"/>
    <property type="evidence" value="ECO:0007669"/>
    <property type="project" value="UniProtKB-KW"/>
</dbReference>
<dbReference type="GO" id="GO:0016168">
    <property type="term" value="F:chlorophyll binding"/>
    <property type="evidence" value="ECO:0007669"/>
    <property type="project" value="UniProtKB-KW"/>
</dbReference>
<dbReference type="GO" id="GO:0009055">
    <property type="term" value="F:electron transfer activity"/>
    <property type="evidence" value="ECO:0007669"/>
    <property type="project" value="UniProtKB-UniRule"/>
</dbReference>
<dbReference type="GO" id="GO:0000287">
    <property type="term" value="F:magnesium ion binding"/>
    <property type="evidence" value="ECO:0007669"/>
    <property type="project" value="UniProtKB-UniRule"/>
</dbReference>
<dbReference type="GO" id="GO:0016491">
    <property type="term" value="F:oxidoreductase activity"/>
    <property type="evidence" value="ECO:0007669"/>
    <property type="project" value="UniProtKB-KW"/>
</dbReference>
<dbReference type="GO" id="GO:0015979">
    <property type="term" value="P:photosynthesis"/>
    <property type="evidence" value="ECO:0007669"/>
    <property type="project" value="UniProtKB-UniRule"/>
</dbReference>
<dbReference type="FunFam" id="1.20.1130.10:FF:000001">
    <property type="entry name" value="Photosystem I P700 chlorophyll a apoprotein A2"/>
    <property type="match status" value="1"/>
</dbReference>
<dbReference type="Gene3D" id="1.20.1130.10">
    <property type="entry name" value="Photosystem I PsaA/PsaB"/>
    <property type="match status" value="1"/>
</dbReference>
<dbReference type="HAMAP" id="MF_00458">
    <property type="entry name" value="PSI_PsaA"/>
    <property type="match status" value="1"/>
</dbReference>
<dbReference type="InterPro" id="IPR006243">
    <property type="entry name" value="PSI_PsaA"/>
</dbReference>
<dbReference type="InterPro" id="IPR001280">
    <property type="entry name" value="PSI_PsaA/B"/>
</dbReference>
<dbReference type="InterPro" id="IPR020586">
    <property type="entry name" value="PSI_PsaA/B_CS"/>
</dbReference>
<dbReference type="InterPro" id="IPR036408">
    <property type="entry name" value="PSI_PsaA/B_sf"/>
</dbReference>
<dbReference type="NCBIfam" id="TIGR01335">
    <property type="entry name" value="psaA"/>
    <property type="match status" value="1"/>
</dbReference>
<dbReference type="PANTHER" id="PTHR30128">
    <property type="entry name" value="OUTER MEMBRANE PROTEIN, OMPA-RELATED"/>
    <property type="match status" value="1"/>
</dbReference>
<dbReference type="PANTHER" id="PTHR30128:SF19">
    <property type="entry name" value="PHOTOSYSTEM I P700 CHLOROPHYLL A APOPROTEIN A1-RELATED"/>
    <property type="match status" value="1"/>
</dbReference>
<dbReference type="Pfam" id="PF00223">
    <property type="entry name" value="PsaA_PsaB"/>
    <property type="match status" value="1"/>
</dbReference>
<dbReference type="PIRSF" id="PIRSF002905">
    <property type="entry name" value="PSI_A"/>
    <property type="match status" value="1"/>
</dbReference>
<dbReference type="PRINTS" id="PR00257">
    <property type="entry name" value="PHOTSYSPSAAB"/>
</dbReference>
<dbReference type="SUPFAM" id="SSF81558">
    <property type="entry name" value="Photosystem I subunits PsaA/PsaB"/>
    <property type="match status" value="1"/>
</dbReference>
<dbReference type="PROSITE" id="PS00419">
    <property type="entry name" value="PHOTOSYSTEM_I_PSAAB"/>
    <property type="match status" value="1"/>
</dbReference>
<comment type="function">
    <text>PsaA and PsaB bind P700, the primary electron donor of photosystem I (PSI), as well as the electron acceptors A0, A1 and FX. PSI is a plastocyanin-ferredoxin oxidoreductase, converting photonic excitation into a charge separation, which transfers an electron from the donor P700 chlorophyll pair to the spectroscopically characterized acceptors A0, A1, FX, FA and FB in turn. Oxidized P700 is reduced on the lumenal side of the thylakoid membrane by plastocyanin.</text>
</comment>
<comment type="catalytic activity">
    <reaction evidence="1">
        <text>reduced [plastocyanin] + hnu + oxidized [2Fe-2S]-[ferredoxin] = oxidized [plastocyanin] + reduced [2Fe-2S]-[ferredoxin]</text>
        <dbReference type="Rhea" id="RHEA:30407"/>
        <dbReference type="Rhea" id="RHEA-COMP:10000"/>
        <dbReference type="Rhea" id="RHEA-COMP:10001"/>
        <dbReference type="Rhea" id="RHEA-COMP:10039"/>
        <dbReference type="Rhea" id="RHEA-COMP:10040"/>
        <dbReference type="ChEBI" id="CHEBI:29036"/>
        <dbReference type="ChEBI" id="CHEBI:30212"/>
        <dbReference type="ChEBI" id="CHEBI:33737"/>
        <dbReference type="ChEBI" id="CHEBI:33738"/>
        <dbReference type="ChEBI" id="CHEBI:49552"/>
        <dbReference type="EC" id="1.97.1.12"/>
    </reaction>
</comment>
<comment type="cofactor">
    <text evidence="1">P700 is a chlorophyll a/chlorophyll a' dimer, A0 is one or more chlorophyll a, A1 is one or both phylloquinones and FX is a shared 4Fe-4S iron-sulfur center.</text>
</comment>
<comment type="subunit">
    <text evidence="1">The PsaA/B heterodimer binds the P700 chlorophyll special pair and subsequent electron acceptors. PSI consists of a core antenna complex that captures photons, and an electron transfer chain that converts photonic excitation into a charge separation. The eukaryotic PSI reaction center is composed of at least 11 subunits.</text>
</comment>
<comment type="subcellular location">
    <subcellularLocation>
        <location evidence="1">Plastid</location>
        <location evidence="1">Chloroplast thylakoid membrane</location>
        <topology evidence="1">Multi-pass membrane protein</topology>
    </subcellularLocation>
</comment>
<comment type="similarity">
    <text evidence="1">Belongs to the PsaA/PsaB family.</text>
</comment>
<name>PSAA_SORBI</name>
<organism>
    <name type="scientific">Sorghum bicolor</name>
    <name type="common">Sorghum</name>
    <name type="synonym">Sorghum vulgare</name>
    <dbReference type="NCBI Taxonomy" id="4558"/>
    <lineage>
        <taxon>Eukaryota</taxon>
        <taxon>Viridiplantae</taxon>
        <taxon>Streptophyta</taxon>
        <taxon>Embryophyta</taxon>
        <taxon>Tracheophyta</taxon>
        <taxon>Spermatophyta</taxon>
        <taxon>Magnoliopsida</taxon>
        <taxon>Liliopsida</taxon>
        <taxon>Poales</taxon>
        <taxon>Poaceae</taxon>
        <taxon>PACMAD clade</taxon>
        <taxon>Panicoideae</taxon>
        <taxon>Andropogonodae</taxon>
        <taxon>Andropogoneae</taxon>
        <taxon>Sorghinae</taxon>
        <taxon>Sorghum</taxon>
    </lineage>
</organism>
<sequence>MIIRPSEPEVKIAVDRDPVKTSFEEWARPGHFSRTIAKGPDTTTWIWNLHADAHDFDSHTGDLEEISRKVFSAHFGQLSIIFLWLSGMYFHGARFSNYEAWLSDPTHIGPSAQVVWPIVGQEILNGDVGGGFRGIQITSGFFQIWRASGITSELQLYCTAIGALIFASLMLFAGWFHYHKAAPKLAWFQDVESMLNHHLAGLLGLGSLSWAGHQIHVSLPINQFLDAGVDPKEIPLPHEFILNRDLLAQLYPSFAEGATPFFTLNWSKYAEFLSFRGGLDPITGGLWLSDIAHHHLAIAILFLIAGHMYRTNWGIGHGLKDILEAHKGPFTGQGHKGLYEILTTSWHAQLSLNLAMLGSTTIVVAHHMYSMPPYPYLATDYGTQLSLFTHHMWIGGFLIVGAAAHAAIFMVRDYDPTTRYNDLLDRVLRHRDAIISHLNWVCIFLGFHSFGLYIHNDTMSALGRPQDMFSDTAIQLQPIFAQWIQNIHAGAPGVTAPGATTSTSLTWGGGELVAVGGKVALLPIPLGTADFLVHHIHAFTIHVTVLILLKGVLFARSSRLIPDKANLGFRFPCDGPGRGGTCQVSAWDHVFLGLFWMYNSISVVIFHFSWKMQSDVWGTISDQGIVTHITGGNFAQSSITINGWLRDFLWAQASQVIQSYGSSLSAYGLFFLGAHFVWAFSLMFLFSGRGYWQELIESIVWAHNKLKVAPATQPRALSIIQGRAVGVTHYLLGGIATTWAFFLARIIAVG</sequence>
<feature type="chain" id="PRO_0000088577" description="Photosystem I P700 chlorophyll a apoprotein A1">
    <location>
        <begin position="1"/>
        <end position="750"/>
    </location>
</feature>
<feature type="transmembrane region" description="Helical; Name=I" evidence="1">
    <location>
        <begin position="70"/>
        <end position="93"/>
    </location>
</feature>
<feature type="transmembrane region" description="Helical; Name=II" evidence="1">
    <location>
        <begin position="156"/>
        <end position="179"/>
    </location>
</feature>
<feature type="transmembrane region" description="Helical; Name=III" evidence="1">
    <location>
        <begin position="195"/>
        <end position="219"/>
    </location>
</feature>
<feature type="transmembrane region" description="Helical; Name=IV" evidence="1">
    <location>
        <begin position="291"/>
        <end position="309"/>
    </location>
</feature>
<feature type="transmembrane region" description="Helical; Name=V" evidence="1">
    <location>
        <begin position="346"/>
        <end position="369"/>
    </location>
</feature>
<feature type="transmembrane region" description="Helical; Name=VI" evidence="1">
    <location>
        <begin position="385"/>
        <end position="411"/>
    </location>
</feature>
<feature type="transmembrane region" description="Helical; Name=VII" evidence="1">
    <location>
        <begin position="433"/>
        <end position="455"/>
    </location>
</feature>
<feature type="transmembrane region" description="Helical; Name=VIII" evidence="1">
    <location>
        <begin position="531"/>
        <end position="549"/>
    </location>
</feature>
<feature type="transmembrane region" description="Helical; Name=IX" evidence="1">
    <location>
        <begin position="589"/>
        <end position="610"/>
    </location>
</feature>
<feature type="transmembrane region" description="Helical; Name=X" evidence="1">
    <location>
        <begin position="664"/>
        <end position="686"/>
    </location>
</feature>
<feature type="transmembrane region" description="Helical; Name=XI" evidence="1">
    <location>
        <begin position="724"/>
        <end position="744"/>
    </location>
</feature>
<feature type="binding site" evidence="1">
    <location>
        <position position="573"/>
    </location>
    <ligand>
        <name>[4Fe-4S] cluster</name>
        <dbReference type="ChEBI" id="CHEBI:49883"/>
        <note>ligand shared between dimeric partners</note>
    </ligand>
</feature>
<feature type="binding site" evidence="1">
    <location>
        <position position="582"/>
    </location>
    <ligand>
        <name>[4Fe-4S] cluster</name>
        <dbReference type="ChEBI" id="CHEBI:49883"/>
        <note>ligand shared between dimeric partners</note>
    </ligand>
</feature>
<feature type="binding site" description="axial binding residue" evidence="1">
    <location>
        <position position="675"/>
    </location>
    <ligand>
        <name>chlorophyll a'</name>
        <dbReference type="ChEBI" id="CHEBI:189419"/>
        <label>A1</label>
    </ligand>
    <ligandPart>
        <name>Mg</name>
        <dbReference type="ChEBI" id="CHEBI:25107"/>
    </ligandPart>
</feature>
<feature type="binding site" description="axial binding residue" evidence="1">
    <location>
        <position position="683"/>
    </location>
    <ligand>
        <name>chlorophyll a</name>
        <dbReference type="ChEBI" id="CHEBI:58416"/>
        <label>A3</label>
    </ligand>
    <ligandPart>
        <name>Mg</name>
        <dbReference type="ChEBI" id="CHEBI:25107"/>
    </ligandPart>
</feature>
<feature type="binding site" evidence="1">
    <location>
        <position position="691"/>
    </location>
    <ligand>
        <name>chlorophyll a</name>
        <dbReference type="ChEBI" id="CHEBI:58416"/>
        <label>A3</label>
    </ligand>
</feature>
<feature type="binding site" evidence="1">
    <location>
        <position position="692"/>
    </location>
    <ligand>
        <name>phylloquinone</name>
        <dbReference type="ChEBI" id="CHEBI:18067"/>
        <label>A</label>
    </ligand>
</feature>
<protein>
    <recommendedName>
        <fullName evidence="1">Photosystem I P700 chlorophyll a apoprotein A1</fullName>
        <ecNumber evidence="1">1.97.1.12</ecNumber>
    </recommendedName>
    <alternativeName>
        <fullName evidence="1">PSI-A</fullName>
    </alternativeName>
    <alternativeName>
        <fullName evidence="1">PsaA</fullName>
    </alternativeName>
</protein>
<gene>
    <name evidence="1" type="primary">psaA</name>
</gene>
<keyword id="KW-0004">4Fe-4S</keyword>
<keyword id="KW-0148">Chlorophyll</keyword>
<keyword id="KW-0150">Chloroplast</keyword>
<keyword id="KW-0157">Chromophore</keyword>
<keyword id="KW-0249">Electron transport</keyword>
<keyword id="KW-0408">Iron</keyword>
<keyword id="KW-0411">Iron-sulfur</keyword>
<keyword id="KW-0460">Magnesium</keyword>
<keyword id="KW-0472">Membrane</keyword>
<keyword id="KW-0479">Metal-binding</keyword>
<keyword id="KW-0560">Oxidoreductase</keyword>
<keyword id="KW-0602">Photosynthesis</keyword>
<keyword id="KW-0603">Photosystem I</keyword>
<keyword id="KW-0934">Plastid</keyword>
<keyword id="KW-1185">Reference proteome</keyword>
<keyword id="KW-0793">Thylakoid</keyword>
<keyword id="KW-0812">Transmembrane</keyword>
<keyword id="KW-1133">Transmembrane helix</keyword>
<keyword id="KW-0813">Transport</keyword>
<accession>Q9T2L6</accession>
<accession>A1E9S4</accession>
<geneLocation type="chloroplast"/>
<proteinExistence type="inferred from homology"/>
<reference key="1">
    <citation type="journal article" date="1992" name="Chin. J. Biotechnol.">
        <title>Cloning and nucleotide sequence of chloroplast psaA gene from sorghum.</title>
        <authorList>
            <person name="Gong X."/>
            <person name="Yan J."/>
            <person name="Wu N."/>
            <person name="Yan L."/>
        </authorList>
    </citation>
    <scope>NUCLEOTIDE SEQUENCE [GENOMIC DNA]</scope>
    <source>
        <strain>cv. Qiuji No. 5</strain>
    </source>
</reference>
<reference key="2">
    <citation type="journal article" date="2007" name="Theor. Appl. Genet.">
        <title>Complete chloroplast genome sequences of Hordeum vulgare, Sorghum bicolor and Agrostis stolonifera, and comparative analyses with other grass genomes.</title>
        <authorList>
            <person name="Saski C."/>
            <person name="Lee S.-B."/>
            <person name="Fjellheim S."/>
            <person name="Guda C."/>
            <person name="Jansen R.K."/>
            <person name="Luo H."/>
            <person name="Tomkins J."/>
            <person name="Rognli O.A."/>
            <person name="Daniell H."/>
            <person name="Clarke J.L."/>
        </authorList>
    </citation>
    <scope>NUCLEOTIDE SEQUENCE [LARGE SCALE GENOMIC DNA]</scope>
    <source>
        <strain>cv. BTx623</strain>
    </source>
</reference>